<evidence type="ECO:0000255" key="1"/>
<evidence type="ECO:0000305" key="2"/>
<gene>
    <name type="primary">nirQ</name>
    <name type="ordered locus">PA0520</name>
</gene>
<proteinExistence type="evidence at transcript level"/>
<organism>
    <name type="scientific">Pseudomonas aeruginosa (strain ATCC 15692 / DSM 22644 / CIP 104116 / JCM 14847 / LMG 12228 / 1C / PRS 101 / PAO1)</name>
    <dbReference type="NCBI Taxonomy" id="208964"/>
    <lineage>
        <taxon>Bacteria</taxon>
        <taxon>Pseudomonadati</taxon>
        <taxon>Pseudomonadota</taxon>
        <taxon>Gammaproteobacteria</taxon>
        <taxon>Pseudomonadales</taxon>
        <taxon>Pseudomonadaceae</taxon>
        <taxon>Pseudomonas</taxon>
    </lineage>
</organism>
<dbReference type="EMBL" id="D37883">
    <property type="protein sequence ID" value="BAA07123.1"/>
    <property type="molecule type" value="Genomic_DNA"/>
</dbReference>
<dbReference type="EMBL" id="AE004091">
    <property type="protein sequence ID" value="AAG03909.1"/>
    <property type="molecule type" value="Genomic_DNA"/>
</dbReference>
<dbReference type="PIR" id="JC2288">
    <property type="entry name" value="JC2288"/>
</dbReference>
<dbReference type="RefSeq" id="NP_249211.1">
    <property type="nucleotide sequence ID" value="NC_002516.2"/>
</dbReference>
<dbReference type="RefSeq" id="WP_003113240.1">
    <property type="nucleotide sequence ID" value="NZ_QZGE01000010.1"/>
</dbReference>
<dbReference type="SMR" id="Q51481"/>
<dbReference type="STRING" id="208964.PA0520"/>
<dbReference type="PaxDb" id="208964-PA0520"/>
<dbReference type="GeneID" id="882214"/>
<dbReference type="KEGG" id="pae:PA0520"/>
<dbReference type="PATRIC" id="fig|208964.12.peg.550"/>
<dbReference type="PseudoCAP" id="PA0520"/>
<dbReference type="HOGENOM" id="CLU_067562_0_0_6"/>
<dbReference type="InParanoid" id="Q51481"/>
<dbReference type="OrthoDB" id="9808317at2"/>
<dbReference type="PhylomeDB" id="Q51481"/>
<dbReference type="BioCyc" id="PAER208964:G1FZ6-525-MONOMER"/>
<dbReference type="Proteomes" id="UP000002438">
    <property type="component" value="Chromosome"/>
</dbReference>
<dbReference type="GO" id="GO:0005737">
    <property type="term" value="C:cytoplasm"/>
    <property type="evidence" value="ECO:0007669"/>
    <property type="project" value="UniProtKB-SubCell"/>
</dbReference>
<dbReference type="GO" id="GO:0005524">
    <property type="term" value="F:ATP binding"/>
    <property type="evidence" value="ECO:0007669"/>
    <property type="project" value="UniProtKB-KW"/>
</dbReference>
<dbReference type="GO" id="GO:0016887">
    <property type="term" value="F:ATP hydrolysis activity"/>
    <property type="evidence" value="ECO:0007669"/>
    <property type="project" value="InterPro"/>
</dbReference>
<dbReference type="GO" id="GO:0003677">
    <property type="term" value="F:DNA binding"/>
    <property type="evidence" value="ECO:0007669"/>
    <property type="project" value="UniProtKB-KW"/>
</dbReference>
<dbReference type="Gene3D" id="3.40.50.300">
    <property type="entry name" value="P-loop containing nucleotide triphosphate hydrolases"/>
    <property type="match status" value="1"/>
</dbReference>
<dbReference type="InterPro" id="IPR011704">
    <property type="entry name" value="ATPase_dyneun-rel_AAA"/>
</dbReference>
<dbReference type="InterPro" id="IPR050764">
    <property type="entry name" value="CbbQ/NirQ/NorQ/GpvN"/>
</dbReference>
<dbReference type="InterPro" id="IPR013615">
    <property type="entry name" value="CbbQ_C"/>
</dbReference>
<dbReference type="InterPro" id="IPR027417">
    <property type="entry name" value="P-loop_NTPase"/>
</dbReference>
<dbReference type="PANTHER" id="PTHR42759:SF7">
    <property type="entry name" value="DENITRIFICATION REGULATORY PROTEIN NIRQ"/>
    <property type="match status" value="1"/>
</dbReference>
<dbReference type="PANTHER" id="PTHR42759">
    <property type="entry name" value="MOXR FAMILY PROTEIN"/>
    <property type="match status" value="1"/>
</dbReference>
<dbReference type="Pfam" id="PF07728">
    <property type="entry name" value="AAA_5"/>
    <property type="match status" value="1"/>
</dbReference>
<dbReference type="Pfam" id="PF08406">
    <property type="entry name" value="CbbQ_C"/>
    <property type="match status" value="1"/>
</dbReference>
<dbReference type="SUPFAM" id="SSF52540">
    <property type="entry name" value="P-loop containing nucleoside triphosphate hydrolases"/>
    <property type="match status" value="1"/>
</dbReference>
<accession>Q51481</accession>
<keyword id="KW-0010">Activator</keyword>
<keyword id="KW-0067">ATP-binding</keyword>
<keyword id="KW-0963">Cytoplasm</keyword>
<keyword id="KW-0238">DNA-binding</keyword>
<keyword id="KW-0547">Nucleotide-binding</keyword>
<keyword id="KW-1185">Reference proteome</keyword>
<keyword id="KW-0804">Transcription</keyword>
<keyword id="KW-0805">Transcription regulation</keyword>
<sequence length="260" mass="28904">MRDATPFYEATGHEIEVFERAWRHGLPVLLKGPTGCGKTRFVQYMARRLELPLYSVACHDDLGAADLLGRHLIGADGTWWQDGPLTRAVREGGICYLDEVVEARQDTTVAIHPLADDRRELYLERTGETLQAPPSFMLVVSYNPGYQNLLKGLKPSTRQRFVALRFDYPAAQQEARILVGESGCAETLAQRLVQLGQALRRLEQHDLEEVASTRLLIFAARLIGDGMDPREACRVALAEPLSDDPATVAALMDIVDLHVA</sequence>
<reference key="1">
    <citation type="journal article" date="1994" name="Biosci. Biotechnol. Biochem.">
        <title>Structure and ANR-dependent transcription of the nir genes for denitrification from Pseudomonas aeruginosa.</title>
        <authorList>
            <person name="Arai H."/>
            <person name="Igarashi Y."/>
            <person name="Kodama T."/>
        </authorList>
    </citation>
    <scope>NUCLEOTIDE SEQUENCE [GENOMIC DNA]</scope>
    <source>
        <strain>PAO1161</strain>
    </source>
</reference>
<reference key="2">
    <citation type="journal article" date="2000" name="Nature">
        <title>Complete genome sequence of Pseudomonas aeruginosa PAO1, an opportunistic pathogen.</title>
        <authorList>
            <person name="Stover C.K."/>
            <person name="Pham X.-Q.T."/>
            <person name="Erwin A.L."/>
            <person name="Mizoguchi S.D."/>
            <person name="Warrener P."/>
            <person name="Hickey M.J."/>
            <person name="Brinkman F.S.L."/>
            <person name="Hufnagle W.O."/>
            <person name="Kowalik D.J."/>
            <person name="Lagrou M."/>
            <person name="Garber R.L."/>
            <person name="Goltry L."/>
            <person name="Tolentino E."/>
            <person name="Westbrock-Wadman S."/>
            <person name="Yuan Y."/>
            <person name="Brody L.L."/>
            <person name="Coulter S.N."/>
            <person name="Folger K.R."/>
            <person name="Kas A."/>
            <person name="Larbig K."/>
            <person name="Lim R.M."/>
            <person name="Smith K.A."/>
            <person name="Spencer D.H."/>
            <person name="Wong G.K.-S."/>
            <person name="Wu Z."/>
            <person name="Paulsen I.T."/>
            <person name="Reizer J."/>
            <person name="Saier M.H. Jr."/>
            <person name="Hancock R.E.W."/>
            <person name="Lory S."/>
            <person name="Olson M.V."/>
        </authorList>
    </citation>
    <scope>NUCLEOTIDE SEQUENCE [LARGE SCALE GENOMIC DNA]</scope>
    <source>
        <strain>ATCC 15692 / DSM 22644 / CIP 104116 / JCM 14847 / LMG 12228 / 1C / PRS 101 / PAO1</strain>
    </source>
</reference>
<feature type="chain" id="PRO_0000219569" description="Denitrification regulatory protein NirQ">
    <location>
        <begin position="1"/>
        <end position="260"/>
    </location>
</feature>
<feature type="DNA-binding region" description="H-T-H motif" evidence="1">
    <location>
        <begin position="234"/>
        <end position="253"/>
    </location>
</feature>
<feature type="binding site" evidence="1">
    <location>
        <begin position="32"/>
        <end position="39"/>
    </location>
    <ligand>
        <name>ATP</name>
        <dbReference type="ChEBI" id="CHEBI:30616"/>
    </ligand>
</feature>
<feature type="binding site" evidence="1">
    <location>
        <begin position="92"/>
        <end position="99"/>
    </location>
    <ligand>
        <name>ATP</name>
        <dbReference type="ChEBI" id="CHEBI:30616"/>
    </ligand>
</feature>
<protein>
    <recommendedName>
        <fullName>Denitrification regulatory protein NirQ</fullName>
    </recommendedName>
</protein>
<comment type="function">
    <text>Activator of nitrite and nitric oxide reductases.</text>
</comment>
<comment type="subcellular location">
    <subcellularLocation>
        <location evidence="2">Cytoplasm</location>
    </subcellularLocation>
</comment>
<comment type="induction">
    <text>Under denitrifying conditions.</text>
</comment>
<comment type="similarity">
    <text evidence="2">Belongs to the CbbQ/NirQ/NorQ/GpvN family.</text>
</comment>
<name>NIRQ_PSEAE</name>